<accession>C0MA42</accession>
<keyword id="KW-0028">Amino-acid biosynthesis</keyword>
<keyword id="KW-0057">Aromatic amino acid biosynthesis</keyword>
<keyword id="KW-0963">Cytoplasm</keyword>
<keyword id="KW-0808">Transferase</keyword>
<name>AROA_STRE4</name>
<sequence>MKLKTKAKALRGRLRVPGDKSISHRAVIFGAIAEGQTVIHGLLRGQDVLATIQAFRDLGVTIYESADSLIIEGRGFKGLKPAQKPLDMGNSGTSMRLLAGLLAAQDFSVQLLGDDSLSRRPMDRITIPLSLMGAELSGQGEKELPPLIVKGCQELRPIHYQLPVASAQVKSAILLAALQTQGETVILEKELTRNHTEEMIEQFGGKLSVAGKQISIKGPQRLQGQTLQIPGDLSSAAFWLAAGLIVPGSDLVLENVGINPTRTGLLEVIEKMGGRISYQAVDKDRQAATLKVSYSTLKGIEISGDLIPRLIDELPVIALLATQAQGTTYIRDAQELRVKETDRIQAVTDVLGQMGADIQATEDGMVTRGKTPLHGAAVSTCGDHRIGMMTAIAALLVEEGQVTLERAEAILTSYPDFFKDLERLWHD</sequence>
<evidence type="ECO:0000255" key="1">
    <source>
        <dbReference type="HAMAP-Rule" id="MF_00210"/>
    </source>
</evidence>
<protein>
    <recommendedName>
        <fullName evidence="1">3-phosphoshikimate 1-carboxyvinyltransferase</fullName>
        <ecNumber evidence="1">2.5.1.19</ecNumber>
    </recommendedName>
    <alternativeName>
        <fullName evidence="1">5-enolpyruvylshikimate-3-phosphate synthase</fullName>
        <shortName evidence="1">EPSP synthase</shortName>
        <shortName evidence="1">EPSPS</shortName>
    </alternativeName>
</protein>
<gene>
    <name evidence="1" type="primary">aroA</name>
    <name type="ordered locus">SEQ_0726</name>
</gene>
<reference key="1">
    <citation type="journal article" date="2009" name="PLoS Pathog.">
        <title>Genomic evidence for the evolution of Streptococcus equi: host restriction, increased virulence, and genetic exchange with human pathogens.</title>
        <authorList>
            <person name="Holden M.T.G."/>
            <person name="Heather Z."/>
            <person name="Paillot R."/>
            <person name="Steward K.F."/>
            <person name="Webb K."/>
            <person name="Ainslie F."/>
            <person name="Jourdan T."/>
            <person name="Bason N.C."/>
            <person name="Holroyd N.E."/>
            <person name="Mungall K."/>
            <person name="Quail M.A."/>
            <person name="Sanders M."/>
            <person name="Simmonds M."/>
            <person name="Willey D."/>
            <person name="Brooks K."/>
            <person name="Aanensen D.M."/>
            <person name="Spratt B.G."/>
            <person name="Jolley K.A."/>
            <person name="Maiden M.C.J."/>
            <person name="Kehoe M."/>
            <person name="Chanter N."/>
            <person name="Bentley S.D."/>
            <person name="Robinson C."/>
            <person name="Maskell D.J."/>
            <person name="Parkhill J."/>
            <person name="Waller A.S."/>
        </authorList>
    </citation>
    <scope>NUCLEOTIDE SEQUENCE [LARGE SCALE GENOMIC DNA]</scope>
    <source>
        <strain>4047</strain>
    </source>
</reference>
<organism>
    <name type="scientific">Streptococcus equi subsp. equi (strain 4047)</name>
    <dbReference type="NCBI Taxonomy" id="553482"/>
    <lineage>
        <taxon>Bacteria</taxon>
        <taxon>Bacillati</taxon>
        <taxon>Bacillota</taxon>
        <taxon>Bacilli</taxon>
        <taxon>Lactobacillales</taxon>
        <taxon>Streptococcaceae</taxon>
        <taxon>Streptococcus</taxon>
    </lineage>
</organism>
<proteinExistence type="inferred from homology"/>
<comment type="function">
    <text evidence="1">Catalyzes the transfer of the enolpyruvyl moiety of phosphoenolpyruvate (PEP) to the 5-hydroxyl of shikimate-3-phosphate (S3P) to produce enolpyruvyl shikimate-3-phosphate and inorganic phosphate.</text>
</comment>
<comment type="catalytic activity">
    <reaction evidence="1">
        <text>3-phosphoshikimate + phosphoenolpyruvate = 5-O-(1-carboxyvinyl)-3-phosphoshikimate + phosphate</text>
        <dbReference type="Rhea" id="RHEA:21256"/>
        <dbReference type="ChEBI" id="CHEBI:43474"/>
        <dbReference type="ChEBI" id="CHEBI:57701"/>
        <dbReference type="ChEBI" id="CHEBI:58702"/>
        <dbReference type="ChEBI" id="CHEBI:145989"/>
        <dbReference type="EC" id="2.5.1.19"/>
    </reaction>
    <physiologicalReaction direction="left-to-right" evidence="1">
        <dbReference type="Rhea" id="RHEA:21257"/>
    </physiologicalReaction>
</comment>
<comment type="pathway">
    <text evidence="1">Metabolic intermediate biosynthesis; chorismate biosynthesis; chorismate from D-erythrose 4-phosphate and phosphoenolpyruvate: step 6/7.</text>
</comment>
<comment type="subunit">
    <text evidence="1">Monomer.</text>
</comment>
<comment type="subcellular location">
    <subcellularLocation>
        <location evidence="1">Cytoplasm</location>
    </subcellularLocation>
</comment>
<comment type="similarity">
    <text evidence="1">Belongs to the EPSP synthase family.</text>
</comment>
<dbReference type="EC" id="2.5.1.19" evidence="1"/>
<dbReference type="EMBL" id="FM204883">
    <property type="protein sequence ID" value="CAW93107.1"/>
    <property type="molecule type" value="Genomic_DNA"/>
</dbReference>
<dbReference type="RefSeq" id="WP_012679248.1">
    <property type="nucleotide sequence ID" value="NC_012471.1"/>
</dbReference>
<dbReference type="SMR" id="C0MA42"/>
<dbReference type="KEGG" id="seu:SEQ_0726"/>
<dbReference type="HOGENOM" id="CLU_024321_0_1_9"/>
<dbReference type="OrthoDB" id="9809920at2"/>
<dbReference type="UniPathway" id="UPA00053">
    <property type="reaction ID" value="UER00089"/>
</dbReference>
<dbReference type="Proteomes" id="UP000001365">
    <property type="component" value="Chromosome"/>
</dbReference>
<dbReference type="GO" id="GO:0005737">
    <property type="term" value="C:cytoplasm"/>
    <property type="evidence" value="ECO:0007669"/>
    <property type="project" value="UniProtKB-SubCell"/>
</dbReference>
<dbReference type="GO" id="GO:0003866">
    <property type="term" value="F:3-phosphoshikimate 1-carboxyvinyltransferase activity"/>
    <property type="evidence" value="ECO:0007669"/>
    <property type="project" value="UniProtKB-UniRule"/>
</dbReference>
<dbReference type="GO" id="GO:0008652">
    <property type="term" value="P:amino acid biosynthetic process"/>
    <property type="evidence" value="ECO:0007669"/>
    <property type="project" value="UniProtKB-KW"/>
</dbReference>
<dbReference type="GO" id="GO:0009073">
    <property type="term" value="P:aromatic amino acid family biosynthetic process"/>
    <property type="evidence" value="ECO:0007669"/>
    <property type="project" value="UniProtKB-KW"/>
</dbReference>
<dbReference type="GO" id="GO:0009423">
    <property type="term" value="P:chorismate biosynthetic process"/>
    <property type="evidence" value="ECO:0007669"/>
    <property type="project" value="UniProtKB-UniRule"/>
</dbReference>
<dbReference type="CDD" id="cd01556">
    <property type="entry name" value="EPSP_synthase"/>
    <property type="match status" value="1"/>
</dbReference>
<dbReference type="FunFam" id="3.65.10.10:FF:000005">
    <property type="entry name" value="3-phosphoshikimate 1-carboxyvinyltransferase"/>
    <property type="match status" value="1"/>
</dbReference>
<dbReference type="FunFam" id="3.65.10.10:FF:000006">
    <property type="entry name" value="3-phosphoshikimate 1-carboxyvinyltransferase"/>
    <property type="match status" value="1"/>
</dbReference>
<dbReference type="Gene3D" id="3.65.10.10">
    <property type="entry name" value="Enolpyruvate transferase domain"/>
    <property type="match status" value="2"/>
</dbReference>
<dbReference type="HAMAP" id="MF_00210">
    <property type="entry name" value="EPSP_synth"/>
    <property type="match status" value="1"/>
</dbReference>
<dbReference type="InterPro" id="IPR001986">
    <property type="entry name" value="Enolpyruvate_Tfrase_dom"/>
</dbReference>
<dbReference type="InterPro" id="IPR036968">
    <property type="entry name" value="Enolpyruvate_Tfrase_sf"/>
</dbReference>
<dbReference type="InterPro" id="IPR006264">
    <property type="entry name" value="EPSP_synthase"/>
</dbReference>
<dbReference type="InterPro" id="IPR023193">
    <property type="entry name" value="EPSP_synthase_CS"/>
</dbReference>
<dbReference type="InterPro" id="IPR013792">
    <property type="entry name" value="RNA3'P_cycl/enolpyr_Trfase_a/b"/>
</dbReference>
<dbReference type="NCBIfam" id="TIGR01356">
    <property type="entry name" value="aroA"/>
    <property type="match status" value="1"/>
</dbReference>
<dbReference type="PANTHER" id="PTHR21090">
    <property type="entry name" value="AROM/DEHYDROQUINATE SYNTHASE"/>
    <property type="match status" value="1"/>
</dbReference>
<dbReference type="PANTHER" id="PTHR21090:SF5">
    <property type="entry name" value="PENTAFUNCTIONAL AROM POLYPEPTIDE"/>
    <property type="match status" value="1"/>
</dbReference>
<dbReference type="Pfam" id="PF00275">
    <property type="entry name" value="EPSP_synthase"/>
    <property type="match status" value="1"/>
</dbReference>
<dbReference type="PIRSF" id="PIRSF000505">
    <property type="entry name" value="EPSPS"/>
    <property type="match status" value="1"/>
</dbReference>
<dbReference type="SUPFAM" id="SSF55205">
    <property type="entry name" value="EPT/RTPC-like"/>
    <property type="match status" value="1"/>
</dbReference>
<dbReference type="PROSITE" id="PS00104">
    <property type="entry name" value="EPSP_SYNTHASE_1"/>
    <property type="match status" value="1"/>
</dbReference>
<dbReference type="PROSITE" id="PS00885">
    <property type="entry name" value="EPSP_SYNTHASE_2"/>
    <property type="match status" value="1"/>
</dbReference>
<feature type="chain" id="PRO_1000124707" description="3-phosphoshikimate 1-carboxyvinyltransferase">
    <location>
        <begin position="1"/>
        <end position="427"/>
    </location>
</feature>
<feature type="active site" description="Proton acceptor" evidence="1">
    <location>
        <position position="312"/>
    </location>
</feature>
<feature type="binding site" evidence="1">
    <location>
        <position position="20"/>
    </location>
    <ligand>
        <name>3-phosphoshikimate</name>
        <dbReference type="ChEBI" id="CHEBI:145989"/>
    </ligand>
</feature>
<feature type="binding site" evidence="1">
    <location>
        <position position="20"/>
    </location>
    <ligand>
        <name>phosphoenolpyruvate</name>
        <dbReference type="ChEBI" id="CHEBI:58702"/>
    </ligand>
</feature>
<feature type="binding site" evidence="1">
    <location>
        <position position="21"/>
    </location>
    <ligand>
        <name>3-phosphoshikimate</name>
        <dbReference type="ChEBI" id="CHEBI:145989"/>
    </ligand>
</feature>
<feature type="binding site" evidence="1">
    <location>
        <position position="25"/>
    </location>
    <ligand>
        <name>3-phosphoshikimate</name>
        <dbReference type="ChEBI" id="CHEBI:145989"/>
    </ligand>
</feature>
<feature type="binding site" evidence="1">
    <location>
        <position position="92"/>
    </location>
    <ligand>
        <name>phosphoenolpyruvate</name>
        <dbReference type="ChEBI" id="CHEBI:58702"/>
    </ligand>
</feature>
<feature type="binding site" evidence="1">
    <location>
        <position position="120"/>
    </location>
    <ligand>
        <name>phosphoenolpyruvate</name>
        <dbReference type="ChEBI" id="CHEBI:58702"/>
    </ligand>
</feature>
<feature type="binding site" evidence="1">
    <location>
        <position position="166"/>
    </location>
    <ligand>
        <name>3-phosphoshikimate</name>
        <dbReference type="ChEBI" id="CHEBI:145989"/>
    </ligand>
</feature>
<feature type="binding site" evidence="1">
    <location>
        <position position="168"/>
    </location>
    <ligand>
        <name>3-phosphoshikimate</name>
        <dbReference type="ChEBI" id="CHEBI:145989"/>
    </ligand>
</feature>
<feature type="binding site" evidence="1">
    <location>
        <position position="168"/>
    </location>
    <ligand>
        <name>phosphoenolpyruvate</name>
        <dbReference type="ChEBI" id="CHEBI:58702"/>
    </ligand>
</feature>
<feature type="binding site" evidence="1">
    <location>
        <position position="312"/>
    </location>
    <ligand>
        <name>3-phosphoshikimate</name>
        <dbReference type="ChEBI" id="CHEBI:145989"/>
    </ligand>
</feature>
<feature type="binding site" evidence="1">
    <location>
        <position position="339"/>
    </location>
    <ligand>
        <name>3-phosphoshikimate</name>
        <dbReference type="ChEBI" id="CHEBI:145989"/>
    </ligand>
</feature>
<feature type="binding site" evidence="1">
    <location>
        <position position="343"/>
    </location>
    <ligand>
        <name>phosphoenolpyruvate</name>
        <dbReference type="ChEBI" id="CHEBI:58702"/>
    </ligand>
</feature>
<feature type="binding site" evidence="1">
    <location>
        <position position="385"/>
    </location>
    <ligand>
        <name>phosphoenolpyruvate</name>
        <dbReference type="ChEBI" id="CHEBI:58702"/>
    </ligand>
</feature>